<evidence type="ECO:0000255" key="1">
    <source>
        <dbReference type="HAMAP-Rule" id="MF_01665"/>
    </source>
</evidence>
<organism>
    <name type="scientific">Paramagnetospirillum magneticum (strain ATCC 700264 / AMB-1)</name>
    <name type="common">Magnetospirillum magneticum</name>
    <dbReference type="NCBI Taxonomy" id="342108"/>
    <lineage>
        <taxon>Bacteria</taxon>
        <taxon>Pseudomonadati</taxon>
        <taxon>Pseudomonadota</taxon>
        <taxon>Alphaproteobacteria</taxon>
        <taxon>Rhodospirillales</taxon>
        <taxon>Magnetospirillaceae</taxon>
        <taxon>Paramagnetospirillum</taxon>
    </lineage>
</organism>
<proteinExistence type="inferred from homology"/>
<gene>
    <name evidence="1" type="primary">ctaA</name>
    <name type="ordered locus">amb2219</name>
</gene>
<feature type="chain" id="PRO_0000349041" description="Heme A synthase">
    <location>
        <begin position="1"/>
        <end position="354"/>
    </location>
</feature>
<feature type="transmembrane region" description="Helical" evidence="1">
    <location>
        <begin position="21"/>
        <end position="41"/>
    </location>
</feature>
<feature type="transmembrane region" description="Helical" evidence="1">
    <location>
        <begin position="106"/>
        <end position="126"/>
    </location>
</feature>
<feature type="transmembrane region" description="Helical" evidence="1">
    <location>
        <begin position="139"/>
        <end position="159"/>
    </location>
</feature>
<feature type="transmembrane region" description="Helical" evidence="1">
    <location>
        <begin position="171"/>
        <end position="191"/>
    </location>
</feature>
<feature type="transmembrane region" description="Helical" evidence="1">
    <location>
        <begin position="212"/>
        <end position="232"/>
    </location>
</feature>
<feature type="transmembrane region" description="Helical" evidence="1">
    <location>
        <begin position="268"/>
        <end position="288"/>
    </location>
</feature>
<feature type="transmembrane region" description="Helical" evidence="1">
    <location>
        <begin position="304"/>
        <end position="324"/>
    </location>
</feature>
<feature type="transmembrane region" description="Helical" evidence="1">
    <location>
        <begin position="326"/>
        <end position="346"/>
    </location>
</feature>
<feature type="binding site" description="axial binding residue" evidence="1">
    <location>
        <position position="272"/>
    </location>
    <ligand>
        <name>heme</name>
        <dbReference type="ChEBI" id="CHEBI:30413"/>
    </ligand>
    <ligandPart>
        <name>Fe</name>
        <dbReference type="ChEBI" id="CHEBI:18248"/>
    </ligandPart>
</feature>
<feature type="binding site" description="axial binding residue" evidence="1">
    <location>
        <position position="332"/>
    </location>
    <ligand>
        <name>heme</name>
        <dbReference type="ChEBI" id="CHEBI:30413"/>
    </ligand>
    <ligandPart>
        <name>Fe</name>
        <dbReference type="ChEBI" id="CHEBI:18248"/>
    </ligandPart>
</feature>
<name>CTAA_PARM1</name>
<sequence>MTTMSRSFGRSDLANGAHRDVAVWLLACCFMVAVMVLLGGLTRLTHSGLSMVEWEPIRGIIPPLNDTDWQLFFEKYKQTPEYIKVNAGMSLAEFKGIFWLEYIHRVWGRLIGVVFGLPFLWLALSGRIGRAMVPRLAGVFLLGAAQGGMGWFMVKSGLVDNPAVSHYRLTAHLALAFLIHGWMFWLALDILADHRSTRRRAHGDVGAVRSWMLGLTGLVIVTLLFGGLVAGLKAGLIYNTWPLMDGAIVPKDLFPEGFHSLFEDIKTVQFGHRTLAEITIVVALVGWFRTRARLGTQTPAAIHAVGLMALLQVGLGIGTLVMVVPVWLASAHQMGAMALLTLCLWALHDLGRRI</sequence>
<keyword id="KW-1003">Cell membrane</keyword>
<keyword id="KW-0350">Heme biosynthesis</keyword>
<keyword id="KW-0408">Iron</keyword>
<keyword id="KW-0472">Membrane</keyword>
<keyword id="KW-0479">Metal-binding</keyword>
<keyword id="KW-0560">Oxidoreductase</keyword>
<keyword id="KW-0812">Transmembrane</keyword>
<keyword id="KW-1133">Transmembrane helix</keyword>
<reference key="1">
    <citation type="journal article" date="2005" name="DNA Res.">
        <title>Complete genome sequence of the facultative anaerobic magnetotactic bacterium Magnetospirillum sp. strain AMB-1.</title>
        <authorList>
            <person name="Matsunaga T."/>
            <person name="Okamura Y."/>
            <person name="Fukuda Y."/>
            <person name="Wahyudi A.T."/>
            <person name="Murase Y."/>
            <person name="Takeyama H."/>
        </authorList>
    </citation>
    <scope>NUCLEOTIDE SEQUENCE [LARGE SCALE GENOMIC DNA]</scope>
    <source>
        <strain>ATCC 700264 / AMB-1</strain>
    </source>
</reference>
<dbReference type="EC" id="1.17.99.9" evidence="1"/>
<dbReference type="EMBL" id="AP007255">
    <property type="protein sequence ID" value="BAE51023.1"/>
    <property type="molecule type" value="Genomic_DNA"/>
</dbReference>
<dbReference type="RefSeq" id="WP_011384617.1">
    <property type="nucleotide sequence ID" value="NC_007626.1"/>
</dbReference>
<dbReference type="SMR" id="Q2W552"/>
<dbReference type="STRING" id="342108.amb2219"/>
<dbReference type="KEGG" id="mag:amb2219"/>
<dbReference type="HOGENOM" id="CLU_017627_0_0_5"/>
<dbReference type="OrthoDB" id="9793156at2"/>
<dbReference type="UniPathway" id="UPA00269">
    <property type="reaction ID" value="UER00713"/>
</dbReference>
<dbReference type="Proteomes" id="UP000007058">
    <property type="component" value="Chromosome"/>
</dbReference>
<dbReference type="GO" id="GO:0005886">
    <property type="term" value="C:plasma membrane"/>
    <property type="evidence" value="ECO:0007669"/>
    <property type="project" value="UniProtKB-SubCell"/>
</dbReference>
<dbReference type="GO" id="GO:0046872">
    <property type="term" value="F:metal ion binding"/>
    <property type="evidence" value="ECO:0007669"/>
    <property type="project" value="UniProtKB-KW"/>
</dbReference>
<dbReference type="GO" id="GO:0016653">
    <property type="term" value="F:oxidoreductase activity, acting on NAD(P)H, heme protein as acceptor"/>
    <property type="evidence" value="ECO:0007669"/>
    <property type="project" value="InterPro"/>
</dbReference>
<dbReference type="GO" id="GO:0006784">
    <property type="term" value="P:heme A biosynthetic process"/>
    <property type="evidence" value="ECO:0007669"/>
    <property type="project" value="UniProtKB-UniRule"/>
</dbReference>
<dbReference type="HAMAP" id="MF_01665">
    <property type="entry name" value="HemeA_synth_type2"/>
    <property type="match status" value="1"/>
</dbReference>
<dbReference type="InterPro" id="IPR003780">
    <property type="entry name" value="COX15/CtaA_fam"/>
</dbReference>
<dbReference type="InterPro" id="IPR023754">
    <property type="entry name" value="HemeA_Synthase_type2"/>
</dbReference>
<dbReference type="PANTHER" id="PTHR23289">
    <property type="entry name" value="CYTOCHROME C OXIDASE ASSEMBLY PROTEIN COX15"/>
    <property type="match status" value="1"/>
</dbReference>
<dbReference type="PANTHER" id="PTHR23289:SF2">
    <property type="entry name" value="CYTOCHROME C OXIDASE ASSEMBLY PROTEIN COX15 HOMOLOG"/>
    <property type="match status" value="1"/>
</dbReference>
<dbReference type="Pfam" id="PF02628">
    <property type="entry name" value="COX15-CtaA"/>
    <property type="match status" value="1"/>
</dbReference>
<accession>Q2W552</accession>
<protein>
    <recommendedName>
        <fullName evidence="1">Heme A synthase</fullName>
        <shortName evidence="1">HAS</shortName>
        <ecNumber evidence="1">1.17.99.9</ecNumber>
    </recommendedName>
    <alternativeName>
        <fullName evidence="1">Cytochrome aa3-controlling protein</fullName>
    </alternativeName>
</protein>
<comment type="function">
    <text evidence="1">Catalyzes the conversion of heme O to heme A by two successive hydroxylations of the methyl group at C8. The first hydroxylation forms heme I, the second hydroxylation results in an unstable dihydroxymethyl group, which spontaneously dehydrates, resulting in the formyl group of heme A.</text>
</comment>
<comment type="catalytic activity">
    <reaction evidence="1">
        <text>Fe(II)-heme o + 2 A + H2O = Fe(II)-heme a + 2 AH2</text>
        <dbReference type="Rhea" id="RHEA:63388"/>
        <dbReference type="ChEBI" id="CHEBI:13193"/>
        <dbReference type="ChEBI" id="CHEBI:15377"/>
        <dbReference type="ChEBI" id="CHEBI:17499"/>
        <dbReference type="ChEBI" id="CHEBI:60530"/>
        <dbReference type="ChEBI" id="CHEBI:61715"/>
        <dbReference type="EC" id="1.17.99.9"/>
    </reaction>
    <physiologicalReaction direction="left-to-right" evidence="1">
        <dbReference type="Rhea" id="RHEA:63389"/>
    </physiologicalReaction>
</comment>
<comment type="cofactor">
    <cofactor evidence="1">
        <name>heme b</name>
        <dbReference type="ChEBI" id="CHEBI:60344"/>
    </cofactor>
</comment>
<comment type="pathway">
    <text evidence="1">Porphyrin-containing compound metabolism; heme A biosynthesis; heme A from heme O: step 1/1.</text>
</comment>
<comment type="subunit">
    <text evidence="1">Interacts with CtaB.</text>
</comment>
<comment type="subcellular location">
    <subcellularLocation>
        <location evidence="1">Cell membrane</location>
        <topology evidence="1">Multi-pass membrane protein</topology>
    </subcellularLocation>
</comment>
<comment type="similarity">
    <text evidence="1">Belongs to the COX15/CtaA family. Type 2 subfamily.</text>
</comment>